<organism>
    <name type="scientific">Arabidopsis thaliana</name>
    <name type="common">Mouse-ear cress</name>
    <dbReference type="NCBI Taxonomy" id="3702"/>
    <lineage>
        <taxon>Eukaryota</taxon>
        <taxon>Viridiplantae</taxon>
        <taxon>Streptophyta</taxon>
        <taxon>Embryophyta</taxon>
        <taxon>Tracheophyta</taxon>
        <taxon>Spermatophyta</taxon>
        <taxon>Magnoliopsida</taxon>
        <taxon>eudicotyledons</taxon>
        <taxon>Gunneridae</taxon>
        <taxon>Pentapetalae</taxon>
        <taxon>rosids</taxon>
        <taxon>malvids</taxon>
        <taxon>Brassicales</taxon>
        <taxon>Brassicaceae</taxon>
        <taxon>Camelineae</taxon>
        <taxon>Arabidopsis</taxon>
    </lineage>
</organism>
<comment type="function">
    <text evidence="3">Catalyzes the conversion of 4-hydroxy-tetrahydrodipicolinate (HTPA) to tetrahydrodipicolinate.</text>
</comment>
<comment type="catalytic activity">
    <reaction>
        <text>(S)-2,3,4,5-tetrahydrodipicolinate + NAD(+) + H2O = (2S,4S)-4-hydroxy-2,3,4,5-tetrahydrodipicolinate + NADH + H(+)</text>
        <dbReference type="Rhea" id="RHEA:35323"/>
        <dbReference type="ChEBI" id="CHEBI:15377"/>
        <dbReference type="ChEBI" id="CHEBI:15378"/>
        <dbReference type="ChEBI" id="CHEBI:16845"/>
        <dbReference type="ChEBI" id="CHEBI:57540"/>
        <dbReference type="ChEBI" id="CHEBI:57945"/>
        <dbReference type="ChEBI" id="CHEBI:67139"/>
        <dbReference type="EC" id="1.17.1.8"/>
    </reaction>
</comment>
<comment type="catalytic activity">
    <reaction>
        <text>(S)-2,3,4,5-tetrahydrodipicolinate + NADP(+) + H2O = (2S,4S)-4-hydroxy-2,3,4,5-tetrahydrodipicolinate + NADPH + H(+)</text>
        <dbReference type="Rhea" id="RHEA:35331"/>
        <dbReference type="ChEBI" id="CHEBI:15377"/>
        <dbReference type="ChEBI" id="CHEBI:15378"/>
        <dbReference type="ChEBI" id="CHEBI:16845"/>
        <dbReference type="ChEBI" id="CHEBI:57783"/>
        <dbReference type="ChEBI" id="CHEBI:58349"/>
        <dbReference type="ChEBI" id="CHEBI:67139"/>
        <dbReference type="EC" id="1.17.1.8"/>
    </reaction>
</comment>
<comment type="pathway">
    <text>Amino-acid biosynthesis; L-lysine biosynthesis via DAP pathway; (S)-tetrahydrodipicolinate from L-aspartate: step 4/4.</text>
</comment>
<comment type="subcellular location">
    <subcellularLocation>
        <location evidence="2">Plastid</location>
        <location evidence="2">Chloroplast</location>
    </subcellularLocation>
</comment>
<comment type="similarity">
    <text evidence="2">Belongs to the DapB family.</text>
</comment>
<comment type="caution">
    <text evidence="2">Was originally thought to be a dihydrodipicolinate reductase (DHDPR), catalyzing the conversion of dihydrodipicolinate to tetrahydrodipicolinate. However, it was shown in E.coli that the substrate of the enzymatic reaction is not dihydrodipicolinate (DHDP) but in fact (2S,4S)-4-hydroxy-2,3,4,5-tetrahydrodipicolinic acid (HTPA), the product released by the DapA-catalyzed reaction.</text>
</comment>
<evidence type="ECO:0000250" key="1"/>
<evidence type="ECO:0000305" key="2"/>
<evidence type="ECO:0000305" key="3">
    <source>
    </source>
</evidence>
<evidence type="ECO:0007744" key="4">
    <source>
    </source>
</evidence>
<evidence type="ECO:0007829" key="5">
    <source>
        <dbReference type="PDB" id="7T34"/>
    </source>
</evidence>
<sequence length="347" mass="37550">MATNGLMASSSVFLHRPRIAFASRTNQTVGKYGKGRVSFMGIGTRRLPVVLSMTAMADSGEEAVKSVLPGNGISIMVNGCSGKMGKAVIKAADSAGVNIVPISFGSAGEDGQRVEVCGKEITVHGPTEREKVLSSVFEKHPELIVVDYTIPSAVNDNAELYSKVGVPFVMGTTGGDRNKLYETVEEAKIYAVISPQMGKQVVAFLAAMEIMAEQFPGAFSGYSLDVMESHQASKLDASGTAKAVISCFQELGVSYDMDQIQLIRDPKQQVEMVGVPEEHISGHAFHLYHLTSPDETVSFEFQHNVCGRSIYAEGTVDAVLFLAKKIRLKADQRIYNMIDVLREGNMR</sequence>
<keyword id="KW-0002">3D-structure</keyword>
<keyword id="KW-0007">Acetylation</keyword>
<keyword id="KW-0028">Amino-acid biosynthesis</keyword>
<keyword id="KW-0150">Chloroplast</keyword>
<keyword id="KW-0220">Diaminopimelate biosynthesis</keyword>
<keyword id="KW-0457">Lysine biosynthesis</keyword>
<keyword id="KW-0520">NAD</keyword>
<keyword id="KW-0521">NADP</keyword>
<keyword id="KW-0560">Oxidoreductase</keyword>
<keyword id="KW-0934">Plastid</keyword>
<keyword id="KW-1185">Reference proteome</keyword>
<keyword id="KW-0809">Transit peptide</keyword>
<reference key="1">
    <citation type="journal article" date="1999" name="Nature">
        <title>Sequence and analysis of chromosome 2 of the plant Arabidopsis thaliana.</title>
        <authorList>
            <person name="Lin X."/>
            <person name="Kaul S."/>
            <person name="Rounsley S.D."/>
            <person name="Shea T.P."/>
            <person name="Benito M.-I."/>
            <person name="Town C.D."/>
            <person name="Fujii C.Y."/>
            <person name="Mason T.M."/>
            <person name="Bowman C.L."/>
            <person name="Barnstead M.E."/>
            <person name="Feldblyum T.V."/>
            <person name="Buell C.R."/>
            <person name="Ketchum K.A."/>
            <person name="Lee J.J."/>
            <person name="Ronning C.M."/>
            <person name="Koo H.L."/>
            <person name="Moffat K.S."/>
            <person name="Cronin L.A."/>
            <person name="Shen M."/>
            <person name="Pai G."/>
            <person name="Van Aken S."/>
            <person name="Umayam L."/>
            <person name="Tallon L.J."/>
            <person name="Gill J.E."/>
            <person name="Adams M.D."/>
            <person name="Carrera A.J."/>
            <person name="Creasy T.H."/>
            <person name="Goodman H.M."/>
            <person name="Somerville C.R."/>
            <person name="Copenhaver G.P."/>
            <person name="Preuss D."/>
            <person name="Nierman W.C."/>
            <person name="White O."/>
            <person name="Eisen J.A."/>
            <person name="Salzberg S.L."/>
            <person name="Fraser C.M."/>
            <person name="Venter J.C."/>
        </authorList>
    </citation>
    <scope>NUCLEOTIDE SEQUENCE [LARGE SCALE GENOMIC DNA]</scope>
    <source>
        <strain>cv. Columbia</strain>
    </source>
</reference>
<reference key="2">
    <citation type="journal article" date="2017" name="Plant J.">
        <title>Araport11: a complete reannotation of the Arabidopsis thaliana reference genome.</title>
        <authorList>
            <person name="Cheng C.Y."/>
            <person name="Krishnakumar V."/>
            <person name="Chan A.P."/>
            <person name="Thibaud-Nissen F."/>
            <person name="Schobel S."/>
            <person name="Town C.D."/>
        </authorList>
    </citation>
    <scope>GENOME REANNOTATION</scope>
    <source>
        <strain>cv. Columbia</strain>
    </source>
</reference>
<reference key="3">
    <citation type="journal article" date="2003" name="Science">
        <title>Empirical analysis of transcriptional activity in the Arabidopsis genome.</title>
        <authorList>
            <person name="Yamada K."/>
            <person name="Lim J."/>
            <person name="Dale J.M."/>
            <person name="Chen H."/>
            <person name="Shinn P."/>
            <person name="Palm C.J."/>
            <person name="Southwick A.M."/>
            <person name="Wu H.C."/>
            <person name="Kim C.J."/>
            <person name="Nguyen M."/>
            <person name="Pham P.K."/>
            <person name="Cheuk R.F."/>
            <person name="Karlin-Newmann G."/>
            <person name="Liu S.X."/>
            <person name="Lam B."/>
            <person name="Sakano H."/>
            <person name="Wu T."/>
            <person name="Yu G."/>
            <person name="Miranda M."/>
            <person name="Quach H.L."/>
            <person name="Tripp M."/>
            <person name="Chang C.H."/>
            <person name="Lee J.M."/>
            <person name="Toriumi M.J."/>
            <person name="Chan M.M."/>
            <person name="Tang C.C."/>
            <person name="Onodera C.S."/>
            <person name="Deng J.M."/>
            <person name="Akiyama K."/>
            <person name="Ansari Y."/>
            <person name="Arakawa T."/>
            <person name="Banh J."/>
            <person name="Banno F."/>
            <person name="Bowser L."/>
            <person name="Brooks S.Y."/>
            <person name="Carninci P."/>
            <person name="Chao Q."/>
            <person name="Choy N."/>
            <person name="Enju A."/>
            <person name="Goldsmith A.D."/>
            <person name="Gurjal M."/>
            <person name="Hansen N.F."/>
            <person name="Hayashizaki Y."/>
            <person name="Johnson-Hopson C."/>
            <person name="Hsuan V.W."/>
            <person name="Iida K."/>
            <person name="Karnes M."/>
            <person name="Khan S."/>
            <person name="Koesema E."/>
            <person name="Ishida J."/>
            <person name="Jiang P.X."/>
            <person name="Jones T."/>
            <person name="Kawai J."/>
            <person name="Kamiya A."/>
            <person name="Meyers C."/>
            <person name="Nakajima M."/>
            <person name="Narusaka M."/>
            <person name="Seki M."/>
            <person name="Sakurai T."/>
            <person name="Satou M."/>
            <person name="Tamse R."/>
            <person name="Vaysberg M."/>
            <person name="Wallender E.K."/>
            <person name="Wong C."/>
            <person name="Yamamura Y."/>
            <person name="Yuan S."/>
            <person name="Shinozaki K."/>
            <person name="Davis R.W."/>
            <person name="Theologis A."/>
            <person name="Ecker J.R."/>
        </authorList>
    </citation>
    <scope>NUCLEOTIDE SEQUENCE [LARGE SCALE MRNA]</scope>
    <source>
        <strain>cv. Columbia</strain>
    </source>
</reference>
<reference key="4">
    <citation type="submission" date="2002-03" db="EMBL/GenBank/DDBJ databases">
        <title>Full-length cDNA from Arabidopsis thaliana.</title>
        <authorList>
            <person name="Brover V.V."/>
            <person name="Troukhan M.E."/>
            <person name="Alexandrov N.A."/>
            <person name="Lu Y.-P."/>
            <person name="Flavell R.B."/>
            <person name="Feldmann K.A."/>
        </authorList>
    </citation>
    <scope>NUCLEOTIDE SEQUENCE [LARGE SCALE MRNA]</scope>
</reference>
<reference key="5">
    <citation type="journal article" date="2002" name="Science">
        <title>Functional annotation of a full-length Arabidopsis cDNA collection.</title>
        <authorList>
            <person name="Seki M."/>
            <person name="Narusaka M."/>
            <person name="Kamiya A."/>
            <person name="Ishida J."/>
            <person name="Satou M."/>
            <person name="Sakurai T."/>
            <person name="Nakajima M."/>
            <person name="Enju A."/>
            <person name="Akiyama K."/>
            <person name="Oono Y."/>
            <person name="Muramatsu M."/>
            <person name="Hayashizaki Y."/>
            <person name="Kawai J."/>
            <person name="Carninci P."/>
            <person name="Itoh M."/>
            <person name="Ishii Y."/>
            <person name="Arakawa T."/>
            <person name="Shibata K."/>
            <person name="Shinagawa A."/>
            <person name="Shinozaki K."/>
        </authorList>
    </citation>
    <scope>NUCLEOTIDE SEQUENCE [LARGE SCALE MRNA]</scope>
    <source>
        <strain>cv. Columbia</strain>
    </source>
</reference>
<reference key="6">
    <citation type="journal article" date="2005" name="Biochim. Biophys. Acta">
        <title>Biosynthesis of lysine in plants: evidence for a variant of the known bacterial pathways.</title>
        <authorList>
            <person name="Hudson A.O."/>
            <person name="Bless C."/>
            <person name="Macedo P."/>
            <person name="Chatterjee S.P."/>
            <person name="Singh B.K."/>
            <person name="Gilvarg C."/>
            <person name="Leustek T."/>
        </authorList>
    </citation>
    <scope>FUNCTION</scope>
</reference>
<reference key="7">
    <citation type="journal article" date="2012" name="Mol. Cell. Proteomics">
        <title>Comparative large-scale characterisation of plant vs. mammal proteins reveals similar and idiosyncratic N-alpha acetylation features.</title>
        <authorList>
            <person name="Bienvenut W.V."/>
            <person name="Sumpton D."/>
            <person name="Martinez A."/>
            <person name="Lilla S."/>
            <person name="Espagne C."/>
            <person name="Meinnel T."/>
            <person name="Giglione C."/>
        </authorList>
    </citation>
    <scope>ACETYLATION [LARGE SCALE ANALYSIS] AT SER-52</scope>
    <scope>CLEAVAGE OF TRANSIT PEPTIDE [LARGE SCALE ANALYSIS] AFTER LEU-51</scope>
    <scope>IDENTIFICATION BY MASS SPECTROMETRY [LARGE SCALE ANALYSIS]</scope>
</reference>
<protein>
    <recommendedName>
        <fullName>4-hydroxy-tetrahydrodipicolinate reductase 1, chloroplastic</fullName>
        <shortName>HTPA reductase 1</shortName>
        <ecNumber>1.17.1.8</ecNumber>
    </recommendedName>
</protein>
<name>DAPB1_ARATH</name>
<feature type="transit peptide" description="Chloroplast" evidence="4">
    <location>
        <begin position="1"/>
        <end position="51"/>
    </location>
</feature>
<feature type="chain" id="PRO_0000307182" description="4-hydroxy-tetrahydrodipicolinate reductase 1, chloroplastic">
    <location>
        <begin position="52"/>
        <end position="347"/>
    </location>
</feature>
<feature type="active site" description="Proton donor/acceptor" evidence="1">
    <location>
        <position position="230"/>
    </location>
</feature>
<feature type="active site" description="Proton donor" evidence="1">
    <location>
        <position position="234"/>
    </location>
</feature>
<feature type="binding site" evidence="1">
    <location>
        <begin position="79"/>
        <end position="84"/>
    </location>
    <ligand>
        <name>NAD(+)</name>
        <dbReference type="ChEBI" id="CHEBI:57540"/>
    </ligand>
</feature>
<feature type="binding site" evidence="1">
    <location>
        <begin position="171"/>
        <end position="173"/>
    </location>
    <ligand>
        <name>NAD(+)</name>
        <dbReference type="ChEBI" id="CHEBI:57540"/>
    </ligand>
</feature>
<feature type="binding site" evidence="1">
    <location>
        <begin position="194"/>
        <end position="197"/>
    </location>
    <ligand>
        <name>NAD(+)</name>
        <dbReference type="ChEBI" id="CHEBI:57540"/>
    </ligand>
</feature>
<feature type="binding site" evidence="1">
    <location>
        <begin position="239"/>
        <end position="240"/>
    </location>
    <ligand>
        <name>(S)-2,3,4,5-tetrahydrodipicolinate</name>
        <dbReference type="ChEBI" id="CHEBI:16845"/>
    </ligand>
</feature>
<feature type="modified residue" description="N-acetylserine" evidence="4">
    <location>
        <position position="52"/>
    </location>
</feature>
<feature type="strand" evidence="5">
    <location>
        <begin position="74"/>
        <end position="78"/>
    </location>
</feature>
<feature type="turn" evidence="5">
    <location>
        <begin position="79"/>
        <end position="81"/>
    </location>
</feature>
<feature type="helix" evidence="5">
    <location>
        <begin position="83"/>
        <end position="95"/>
    </location>
</feature>
<feature type="strand" evidence="5">
    <location>
        <begin position="101"/>
        <end position="104"/>
    </location>
</feature>
<feature type="strand" evidence="5">
    <location>
        <begin position="122"/>
        <end position="124"/>
    </location>
</feature>
<feature type="strand" evidence="5">
    <location>
        <begin position="126"/>
        <end position="128"/>
    </location>
</feature>
<feature type="helix" evidence="5">
    <location>
        <begin position="129"/>
        <end position="139"/>
    </location>
</feature>
<feature type="strand" evidence="5">
    <location>
        <begin position="143"/>
        <end position="147"/>
    </location>
</feature>
<feature type="helix" evidence="5">
    <location>
        <begin position="151"/>
        <end position="153"/>
    </location>
</feature>
<feature type="helix" evidence="5">
    <location>
        <begin position="154"/>
        <end position="164"/>
    </location>
</feature>
<feature type="strand" evidence="5">
    <location>
        <begin position="168"/>
        <end position="170"/>
    </location>
</feature>
<feature type="helix" evidence="5">
    <location>
        <begin position="177"/>
        <end position="187"/>
    </location>
</feature>
<feature type="strand" evidence="5">
    <location>
        <begin position="191"/>
        <end position="193"/>
    </location>
</feature>
<feature type="helix" evidence="5">
    <location>
        <begin position="199"/>
        <end position="214"/>
    </location>
</feature>
<feature type="turn" evidence="5">
    <location>
        <begin position="216"/>
        <end position="221"/>
    </location>
</feature>
<feature type="strand" evidence="5">
    <location>
        <begin position="223"/>
        <end position="227"/>
    </location>
</feature>
<feature type="helix" evidence="5">
    <location>
        <begin position="241"/>
        <end position="250"/>
    </location>
</feature>
<feature type="strand" evidence="5">
    <location>
        <begin position="282"/>
        <end position="291"/>
    </location>
</feature>
<feature type="strand" evidence="5">
    <location>
        <begin position="298"/>
        <end position="308"/>
    </location>
</feature>
<feature type="helix" evidence="5">
    <location>
        <begin position="309"/>
        <end position="327"/>
    </location>
</feature>
<feature type="helix" evidence="5">
    <location>
        <begin position="337"/>
        <end position="343"/>
    </location>
</feature>
<gene>
    <name type="primary">DAPB1</name>
    <name type="ordered locus">At2g44040</name>
    <name type="ORF">F6E13.17</name>
</gene>
<proteinExistence type="evidence at protein level"/>
<accession>O80574</accession>
<dbReference type="EC" id="1.17.1.8"/>
<dbReference type="EMBL" id="AC004005">
    <property type="protein sequence ID" value="AAC23412.2"/>
    <property type="molecule type" value="Genomic_DNA"/>
</dbReference>
<dbReference type="EMBL" id="CP002685">
    <property type="protein sequence ID" value="AEC10364.1"/>
    <property type="molecule type" value="Genomic_DNA"/>
</dbReference>
<dbReference type="EMBL" id="BT008540">
    <property type="protein sequence ID" value="AAP40367.1"/>
    <property type="molecule type" value="mRNA"/>
</dbReference>
<dbReference type="EMBL" id="AY084299">
    <property type="protein sequence ID" value="AAM60890.1"/>
    <property type="molecule type" value="mRNA"/>
</dbReference>
<dbReference type="EMBL" id="AK118845">
    <property type="protein sequence ID" value="BAC43434.1"/>
    <property type="molecule type" value="mRNA"/>
</dbReference>
<dbReference type="PIR" id="T00684">
    <property type="entry name" value="T00684"/>
</dbReference>
<dbReference type="RefSeq" id="NP_566006.1">
    <property type="nucleotide sequence ID" value="NM_129966.4"/>
</dbReference>
<dbReference type="PDB" id="7T34">
    <property type="method" value="X-ray"/>
    <property type="resolution" value="2.89 A"/>
    <property type="chains" value="A=52-347"/>
</dbReference>
<dbReference type="PDBsum" id="7T34"/>
<dbReference type="SMR" id="O80574"/>
<dbReference type="BioGRID" id="4345">
    <property type="interactions" value="2"/>
</dbReference>
<dbReference type="FunCoup" id="O80574">
    <property type="interactions" value="446"/>
</dbReference>
<dbReference type="IntAct" id="O80574">
    <property type="interactions" value="2"/>
</dbReference>
<dbReference type="STRING" id="3702.O80574"/>
<dbReference type="iPTMnet" id="O80574"/>
<dbReference type="MetOSite" id="O80574"/>
<dbReference type="PaxDb" id="3702-AT2G44040.1"/>
<dbReference type="ProteomicsDB" id="222602"/>
<dbReference type="EnsemblPlants" id="AT2G44040.1">
    <property type="protein sequence ID" value="AT2G44040.1"/>
    <property type="gene ID" value="AT2G44040"/>
</dbReference>
<dbReference type="GeneID" id="819009"/>
<dbReference type="Gramene" id="AT2G44040.1">
    <property type="protein sequence ID" value="AT2G44040.1"/>
    <property type="gene ID" value="AT2G44040"/>
</dbReference>
<dbReference type="KEGG" id="ath:AT2G44040"/>
<dbReference type="Araport" id="AT2G44040"/>
<dbReference type="TAIR" id="AT2G44040"/>
<dbReference type="eggNOG" id="ENOG502QPSY">
    <property type="taxonomic scope" value="Eukaryota"/>
</dbReference>
<dbReference type="HOGENOM" id="CLU_067216_0_0_1"/>
<dbReference type="InParanoid" id="O80574"/>
<dbReference type="OMA" id="GKQIVAM"/>
<dbReference type="PhylomeDB" id="O80574"/>
<dbReference type="BioCyc" id="ARA:AT2G44040-MONOMER"/>
<dbReference type="UniPathway" id="UPA00034">
    <property type="reaction ID" value="UER00018"/>
</dbReference>
<dbReference type="PRO" id="PR:O80574"/>
<dbReference type="Proteomes" id="UP000006548">
    <property type="component" value="Chromosome 2"/>
</dbReference>
<dbReference type="ExpressionAtlas" id="O80574">
    <property type="expression patterns" value="baseline and differential"/>
</dbReference>
<dbReference type="GO" id="GO:0009507">
    <property type="term" value="C:chloroplast"/>
    <property type="evidence" value="ECO:0007005"/>
    <property type="project" value="TAIR"/>
</dbReference>
<dbReference type="GO" id="GO:0009570">
    <property type="term" value="C:chloroplast stroma"/>
    <property type="evidence" value="ECO:0007005"/>
    <property type="project" value="TAIR"/>
</dbReference>
<dbReference type="GO" id="GO:0005829">
    <property type="term" value="C:cytosol"/>
    <property type="evidence" value="ECO:0007005"/>
    <property type="project" value="TAIR"/>
</dbReference>
<dbReference type="GO" id="GO:0008839">
    <property type="term" value="F:4-hydroxy-tetrahydrodipicolinate reductase"/>
    <property type="evidence" value="ECO:0000314"/>
    <property type="project" value="CACAO"/>
</dbReference>
<dbReference type="GO" id="GO:0070402">
    <property type="term" value="F:NADPH binding"/>
    <property type="evidence" value="ECO:0007669"/>
    <property type="project" value="InterPro"/>
</dbReference>
<dbReference type="GO" id="GO:0019877">
    <property type="term" value="P:diaminopimelate biosynthetic process"/>
    <property type="evidence" value="ECO:0007669"/>
    <property type="project" value="UniProtKB-KW"/>
</dbReference>
<dbReference type="GO" id="GO:0009089">
    <property type="term" value="P:lysine biosynthetic process via diaminopimelate"/>
    <property type="evidence" value="ECO:0007669"/>
    <property type="project" value="UniProtKB-UniPathway"/>
</dbReference>
<dbReference type="CDD" id="cd02274">
    <property type="entry name" value="DHDPR_N"/>
    <property type="match status" value="1"/>
</dbReference>
<dbReference type="FunFam" id="3.40.50.720:FF:000264">
    <property type="entry name" value="4-hydroxy-tetrahydrodipicolinate reductase 2 chloroplastic"/>
    <property type="match status" value="1"/>
</dbReference>
<dbReference type="FunFam" id="3.30.360.10:FF:000037">
    <property type="entry name" value="4-hydroxy-tetrahydrodipicolinate reductase 2, chloroplastic"/>
    <property type="match status" value="1"/>
</dbReference>
<dbReference type="Gene3D" id="3.30.360.10">
    <property type="entry name" value="Dihydrodipicolinate Reductase, domain 2"/>
    <property type="match status" value="1"/>
</dbReference>
<dbReference type="Gene3D" id="3.40.50.720">
    <property type="entry name" value="NAD(P)-binding Rossmann-like Domain"/>
    <property type="match status" value="1"/>
</dbReference>
<dbReference type="InterPro" id="IPR022663">
    <property type="entry name" value="DapB_C"/>
</dbReference>
<dbReference type="InterPro" id="IPR000846">
    <property type="entry name" value="DapB_N"/>
</dbReference>
<dbReference type="InterPro" id="IPR023940">
    <property type="entry name" value="DHDPR_bac"/>
</dbReference>
<dbReference type="InterPro" id="IPR011859">
    <property type="entry name" value="Dihydrodipicolinate_Rdtase_pln"/>
</dbReference>
<dbReference type="InterPro" id="IPR036291">
    <property type="entry name" value="NAD(P)-bd_dom_sf"/>
</dbReference>
<dbReference type="NCBIfam" id="TIGR02130">
    <property type="entry name" value="dapB_plant"/>
    <property type="match status" value="1"/>
</dbReference>
<dbReference type="PANTHER" id="PTHR20836:SF0">
    <property type="entry name" value="4-HYDROXY-TETRAHYDRODIPICOLINATE REDUCTASE 1, CHLOROPLASTIC-RELATED"/>
    <property type="match status" value="1"/>
</dbReference>
<dbReference type="PANTHER" id="PTHR20836">
    <property type="entry name" value="DIHYDRODIPICOLINATE REDUCTASE"/>
    <property type="match status" value="1"/>
</dbReference>
<dbReference type="Pfam" id="PF05173">
    <property type="entry name" value="DapB_C"/>
    <property type="match status" value="1"/>
</dbReference>
<dbReference type="Pfam" id="PF01113">
    <property type="entry name" value="DapB_N"/>
    <property type="match status" value="1"/>
</dbReference>
<dbReference type="SUPFAM" id="SSF51735">
    <property type="entry name" value="NAD(P)-binding Rossmann-fold domains"/>
    <property type="match status" value="1"/>
</dbReference>